<gene>
    <name type="primary">rps8</name>
</gene>
<geneLocation type="chloroplast"/>
<protein>
    <recommendedName>
        <fullName evidence="2">Small ribosomal subunit protein uS8c</fullName>
    </recommendedName>
    <alternativeName>
        <fullName>30S ribosomal protein S8, chloroplastic</fullName>
    </alternativeName>
</protein>
<comment type="function">
    <text evidence="1">One of the primary rRNA binding proteins, it binds directly to 16S rRNA central domain where it helps coordinate assembly of the platform of the 30S subunit.</text>
</comment>
<comment type="subunit">
    <text evidence="1">Part of the 30S ribosomal subunit.</text>
</comment>
<comment type="subcellular location">
    <subcellularLocation>
        <location>Plastid</location>
        <location>Chloroplast</location>
    </subcellularLocation>
</comment>
<comment type="similarity">
    <text evidence="2">Belongs to the universal ribosomal protein uS8 family.</text>
</comment>
<sequence>MVNDTISDMLTRIRNANLAKKTSVSLPKTKVHEKMCQILEQEGFIKTFSFSETNTNELIVDLKYQDFASFGNYGVGKPCITNLKRISKPGLRIYTNSREIPKVLGGMGILILSTSKGLMTDRQARKLCLGGEILCSVW</sequence>
<name>RR8_CHLVU</name>
<feature type="chain" id="PRO_0000126567" description="Small ribosomal subunit protein uS8c">
    <location>
        <begin position="1"/>
        <end position="138"/>
    </location>
</feature>
<organism>
    <name type="scientific">Chlorella vulgaris</name>
    <name type="common">Green alga</name>
    <dbReference type="NCBI Taxonomy" id="3077"/>
    <lineage>
        <taxon>Eukaryota</taxon>
        <taxon>Viridiplantae</taxon>
        <taxon>Chlorophyta</taxon>
        <taxon>core chlorophytes</taxon>
        <taxon>Trebouxiophyceae</taxon>
        <taxon>Chlorellales</taxon>
        <taxon>Chlorellaceae</taxon>
        <taxon>Chlorella clade</taxon>
        <taxon>Chlorella</taxon>
    </lineage>
</organism>
<reference key="1">
    <citation type="journal article" date="1997" name="Proc. Natl. Acad. Sci. U.S.A.">
        <title>Complete nucleotide sequence of the chloroplast genome from the green alga Chlorella vulgaris: the existence of genes possibly involved in chloroplast division.</title>
        <authorList>
            <person name="Wakasugi T."/>
            <person name="Nagai T."/>
            <person name="Kapoor M."/>
            <person name="Sugita M."/>
            <person name="Ito M."/>
            <person name="Ito S."/>
            <person name="Tsudzuki J."/>
            <person name="Nakashima K."/>
            <person name="Tsudzuki T."/>
            <person name="Suzuki Y."/>
            <person name="Hamada A."/>
            <person name="Ohta T."/>
            <person name="Inamura A."/>
            <person name="Yoshinaga K."/>
            <person name="Sugiura M."/>
        </authorList>
    </citation>
    <scope>NUCLEOTIDE SEQUENCE [LARGE SCALE GENOMIC DNA]</scope>
    <source>
        <strain>IAM C-27 / Tamiya</strain>
    </source>
</reference>
<accession>P56361</accession>
<evidence type="ECO:0000250" key="1"/>
<evidence type="ECO:0000305" key="2"/>
<proteinExistence type="inferred from homology"/>
<dbReference type="EMBL" id="AB001684">
    <property type="protein sequence ID" value="BAA58001.1"/>
    <property type="molecule type" value="Genomic_DNA"/>
</dbReference>
<dbReference type="PIR" id="T07353">
    <property type="entry name" value="T07353"/>
</dbReference>
<dbReference type="RefSeq" id="NP_045925.1">
    <property type="nucleotide sequence ID" value="NC_001865.1"/>
</dbReference>
<dbReference type="SMR" id="P56361"/>
<dbReference type="GeneID" id="809160"/>
<dbReference type="GO" id="GO:0009507">
    <property type="term" value="C:chloroplast"/>
    <property type="evidence" value="ECO:0007669"/>
    <property type="project" value="UniProtKB-SubCell"/>
</dbReference>
<dbReference type="GO" id="GO:1990904">
    <property type="term" value="C:ribonucleoprotein complex"/>
    <property type="evidence" value="ECO:0007669"/>
    <property type="project" value="UniProtKB-KW"/>
</dbReference>
<dbReference type="GO" id="GO:0005840">
    <property type="term" value="C:ribosome"/>
    <property type="evidence" value="ECO:0007669"/>
    <property type="project" value="UniProtKB-KW"/>
</dbReference>
<dbReference type="GO" id="GO:0019843">
    <property type="term" value="F:rRNA binding"/>
    <property type="evidence" value="ECO:0007669"/>
    <property type="project" value="UniProtKB-UniRule"/>
</dbReference>
<dbReference type="GO" id="GO:0003735">
    <property type="term" value="F:structural constituent of ribosome"/>
    <property type="evidence" value="ECO:0007669"/>
    <property type="project" value="InterPro"/>
</dbReference>
<dbReference type="GO" id="GO:0006412">
    <property type="term" value="P:translation"/>
    <property type="evidence" value="ECO:0007669"/>
    <property type="project" value="UniProtKB-UniRule"/>
</dbReference>
<dbReference type="FunFam" id="3.30.1490.10:FF:000001">
    <property type="entry name" value="30S ribosomal protein S8"/>
    <property type="match status" value="1"/>
</dbReference>
<dbReference type="Gene3D" id="3.30.1370.30">
    <property type="match status" value="1"/>
</dbReference>
<dbReference type="Gene3D" id="3.30.1490.10">
    <property type="match status" value="1"/>
</dbReference>
<dbReference type="HAMAP" id="MF_01302_B">
    <property type="entry name" value="Ribosomal_uS8_B"/>
    <property type="match status" value="1"/>
</dbReference>
<dbReference type="InterPro" id="IPR000630">
    <property type="entry name" value="Ribosomal_uS8"/>
</dbReference>
<dbReference type="InterPro" id="IPR047863">
    <property type="entry name" value="Ribosomal_uS8_CS"/>
</dbReference>
<dbReference type="InterPro" id="IPR035987">
    <property type="entry name" value="Ribosomal_uS8_sf"/>
</dbReference>
<dbReference type="NCBIfam" id="NF001109">
    <property type="entry name" value="PRK00136.1"/>
    <property type="match status" value="1"/>
</dbReference>
<dbReference type="PANTHER" id="PTHR11758">
    <property type="entry name" value="40S RIBOSOMAL PROTEIN S15A"/>
    <property type="match status" value="1"/>
</dbReference>
<dbReference type="Pfam" id="PF00410">
    <property type="entry name" value="Ribosomal_S8"/>
    <property type="match status" value="1"/>
</dbReference>
<dbReference type="SUPFAM" id="SSF56047">
    <property type="entry name" value="Ribosomal protein S8"/>
    <property type="match status" value="1"/>
</dbReference>
<dbReference type="PROSITE" id="PS00053">
    <property type="entry name" value="RIBOSOMAL_S8"/>
    <property type="match status" value="1"/>
</dbReference>
<keyword id="KW-0150">Chloroplast</keyword>
<keyword id="KW-0934">Plastid</keyword>
<keyword id="KW-0687">Ribonucleoprotein</keyword>
<keyword id="KW-0689">Ribosomal protein</keyword>
<keyword id="KW-0694">RNA-binding</keyword>
<keyword id="KW-0699">rRNA-binding</keyword>